<protein>
    <recommendedName>
        <fullName evidence="1">GPI-anchor transamidase</fullName>
        <ecNumber evidence="1">2.6.1.-</ecNumber>
    </recommendedName>
    <alternativeName>
        <fullName>GPI-anchor transamidase component PIGK</fullName>
    </alternativeName>
    <alternativeName>
        <fullName>Phosphatidylinositol-glycan biosynthesis class K protein</fullName>
        <shortName>PIG-K</shortName>
    </alternativeName>
</protein>
<feature type="signal peptide" evidence="1">
    <location>
        <begin position="1"/>
        <end position="27"/>
    </location>
</feature>
<feature type="chain" id="PRO_0000230997" description="GPI-anchor transamidase">
    <location>
        <begin position="28"/>
        <end position="395"/>
    </location>
</feature>
<feature type="topological domain" description="Lumenal" evidence="1">
    <location>
        <begin position="28"/>
        <end position="368"/>
    </location>
</feature>
<feature type="transmembrane region" description="Helical" evidence="1">
    <location>
        <begin position="369"/>
        <end position="385"/>
    </location>
</feature>
<feature type="topological domain" description="Cytoplasmic" evidence="1">
    <location>
        <begin position="386"/>
        <end position="395"/>
    </location>
</feature>
<feature type="region of interest" description="Autoinhibitory loop" evidence="1">
    <location>
        <begin position="231"/>
        <end position="236"/>
    </location>
</feature>
<feature type="active site" description="Proton donor" evidence="1">
    <location>
        <position position="164"/>
    </location>
</feature>
<feature type="active site" description="Nucleophile; acyl-thioester intermediate" evidence="1">
    <location>
        <position position="206"/>
    </location>
</feature>
<feature type="binding site" evidence="1">
    <location>
        <position position="79"/>
    </location>
    <ligand>
        <name>Ca(2+)</name>
        <dbReference type="ChEBI" id="CHEBI:29108"/>
    </ligand>
</feature>
<feature type="binding site" evidence="1">
    <location>
        <position position="82"/>
    </location>
    <ligand>
        <name>Ca(2+)</name>
        <dbReference type="ChEBI" id="CHEBI:29108"/>
    </ligand>
</feature>
<feature type="binding site" evidence="1">
    <location>
        <position position="118"/>
    </location>
    <ligand>
        <name>Ca(2+)</name>
        <dbReference type="ChEBI" id="CHEBI:29108"/>
    </ligand>
</feature>
<feature type="binding site" evidence="1">
    <location>
        <position position="120"/>
    </location>
    <ligand>
        <name>Ca(2+)</name>
        <dbReference type="ChEBI" id="CHEBI:29108"/>
    </ligand>
</feature>
<feature type="binding site" evidence="1">
    <location>
        <position position="206"/>
    </location>
    <ligand>
        <name>a protein</name>
        <dbReference type="ChEBI" id="CHEBI:16541"/>
    </ligand>
    <ligandPart>
        <name>GPI-anchor amidated serine</name>
    </ligandPart>
</feature>
<feature type="binding site" evidence="1">
    <location>
        <position position="232"/>
    </location>
    <ligand>
        <name>a protein</name>
        <dbReference type="ChEBI" id="CHEBI:16541"/>
    </ligand>
    <ligandPart>
        <name>GPI-anchor amidated serine</name>
    </ligandPart>
</feature>
<feature type="binding site" evidence="1">
    <location>
        <position position="234"/>
    </location>
    <ligand>
        <name>a protein</name>
        <dbReference type="ChEBI" id="CHEBI:16541"/>
    </ligand>
    <ligandPart>
        <name>L-serine residue</name>
        <dbReference type="ChEBI" id="CHEBI:29999"/>
    </ligandPart>
</feature>
<feature type="disulfide bond" description="Interchain (with C-182 in PIGT)" evidence="1">
    <location>
        <position position="92"/>
    </location>
</feature>
<feature type="disulfide bond" evidence="1">
    <location>
        <begin position="275"/>
        <end position="280"/>
    </location>
</feature>
<feature type="sequence conflict" description="In Ref. 1; CAH92429." evidence="2" ref="1">
    <original>T</original>
    <variation>A</variation>
    <location>
        <position position="179"/>
    </location>
</feature>
<sequence>MAVTDSLSRAASTLAAVLLLSFGSVAASHIEDQAEQFFRSGHTNNWAVLVCTSRFWFNYRHVANTLSVYRSVKRLGIPDSHIVLMLADDMACNPRNPKPATVFSHKNMELNVYGDDVEVDYRSYEVTVENFLRVLTGRIPPSTPRSKRLLSDDRSNILIYMTGHGGNGFLKFQDSEEITNIELADAFEQMWQKRRYNELLFIIDTCQGASMYERFYSPNIMALASSQVGEDSLSHQPDPAIGVHLMDRYTFYVLEFLEEINPASQTNMNDLFQVCPKSLCVSTPGHRTDLFQRDPKNVLITDFFGSVRKVEITTETIKLQQDSEIMESSYKEDQMDEELMEPLKYAEQLPVAQIIHQKPKLKDWHPPGGFILGLWALIIMVFFKTYGIKHMKFIF</sequence>
<accession>Q5R6L8</accession>
<accession>Q5R731</accession>
<name>GPI8_PONAB</name>
<gene>
    <name evidence="1" type="primary">PIGK</name>
</gene>
<organism>
    <name type="scientific">Pongo abelii</name>
    <name type="common">Sumatran orangutan</name>
    <name type="synonym">Pongo pygmaeus abelii</name>
    <dbReference type="NCBI Taxonomy" id="9601"/>
    <lineage>
        <taxon>Eukaryota</taxon>
        <taxon>Metazoa</taxon>
        <taxon>Chordata</taxon>
        <taxon>Craniata</taxon>
        <taxon>Vertebrata</taxon>
        <taxon>Euteleostomi</taxon>
        <taxon>Mammalia</taxon>
        <taxon>Eutheria</taxon>
        <taxon>Euarchontoglires</taxon>
        <taxon>Primates</taxon>
        <taxon>Haplorrhini</taxon>
        <taxon>Catarrhini</taxon>
        <taxon>Hominidae</taxon>
        <taxon>Pongo</taxon>
    </lineage>
</organism>
<evidence type="ECO:0000250" key="1">
    <source>
        <dbReference type="UniProtKB" id="Q92643"/>
    </source>
</evidence>
<evidence type="ECO:0000305" key="2"/>
<dbReference type="EC" id="2.6.1.-" evidence="1"/>
<dbReference type="EMBL" id="CR860289">
    <property type="protein sequence ID" value="CAH92429.1"/>
    <property type="molecule type" value="mRNA"/>
</dbReference>
<dbReference type="EMBL" id="CR860470">
    <property type="protein sequence ID" value="CAH92592.1"/>
    <property type="molecule type" value="mRNA"/>
</dbReference>
<dbReference type="RefSeq" id="NP_001124569.1">
    <property type="nucleotide sequence ID" value="NM_001131097.1"/>
</dbReference>
<dbReference type="SMR" id="Q5R6L8"/>
<dbReference type="FunCoup" id="Q5R6L8">
    <property type="interactions" value="1449"/>
</dbReference>
<dbReference type="STRING" id="9601.ENSPPYP00000001424"/>
<dbReference type="MEROPS" id="C13.005"/>
<dbReference type="Ensembl" id="ENSPPYT00000042291.1">
    <property type="protein sequence ID" value="ENSPPYP00000042583.1"/>
    <property type="gene ID" value="ENSPPYG00000001225.3"/>
</dbReference>
<dbReference type="GeneID" id="100169743"/>
<dbReference type="KEGG" id="pon:100169743"/>
<dbReference type="CTD" id="10026"/>
<dbReference type="eggNOG" id="KOG1349">
    <property type="taxonomic scope" value="Eukaryota"/>
</dbReference>
<dbReference type="GeneTree" id="ENSGT00940000156273"/>
<dbReference type="HOGENOM" id="CLU_044656_0_0_1"/>
<dbReference type="InParanoid" id="Q5R6L8"/>
<dbReference type="OMA" id="VMESQFP"/>
<dbReference type="OrthoDB" id="192611at2759"/>
<dbReference type="UniPathway" id="UPA00196"/>
<dbReference type="Proteomes" id="UP000001595">
    <property type="component" value="Chromosome 1"/>
</dbReference>
<dbReference type="GO" id="GO:0042765">
    <property type="term" value="C:GPI-anchor transamidase complex"/>
    <property type="evidence" value="ECO:0000250"/>
    <property type="project" value="UniProtKB"/>
</dbReference>
<dbReference type="GO" id="GO:0003923">
    <property type="term" value="F:GPI-anchor transamidase activity"/>
    <property type="evidence" value="ECO:0000250"/>
    <property type="project" value="UniProtKB"/>
</dbReference>
<dbReference type="GO" id="GO:0016255">
    <property type="term" value="P:attachment of GPI anchor to protein"/>
    <property type="evidence" value="ECO:0000250"/>
    <property type="project" value="UniProtKB"/>
</dbReference>
<dbReference type="GO" id="GO:0006506">
    <property type="term" value="P:GPI anchor biosynthetic process"/>
    <property type="evidence" value="ECO:0007669"/>
    <property type="project" value="UniProtKB-UniPathway"/>
</dbReference>
<dbReference type="GO" id="GO:0006508">
    <property type="term" value="P:proteolysis"/>
    <property type="evidence" value="ECO:0007669"/>
    <property type="project" value="UniProtKB-KW"/>
</dbReference>
<dbReference type="FunFam" id="3.40.50.1460:FF:000002">
    <property type="entry name" value="GPI-anchor transamidase"/>
    <property type="match status" value="1"/>
</dbReference>
<dbReference type="Gene3D" id="3.40.50.1460">
    <property type="match status" value="1"/>
</dbReference>
<dbReference type="InterPro" id="IPR028361">
    <property type="entry name" value="GPI_transamidase"/>
</dbReference>
<dbReference type="InterPro" id="IPR001096">
    <property type="entry name" value="Peptidase_C13"/>
</dbReference>
<dbReference type="PANTHER" id="PTHR48067">
    <property type="entry name" value="GPI-ANCHOR TRANSAMIDASE"/>
    <property type="match status" value="1"/>
</dbReference>
<dbReference type="PANTHER" id="PTHR48067:SF1">
    <property type="entry name" value="GPI-ANCHOR TRANSAMIDASE"/>
    <property type="match status" value="1"/>
</dbReference>
<dbReference type="Pfam" id="PF01650">
    <property type="entry name" value="Peptidase_C13"/>
    <property type="match status" value="1"/>
</dbReference>
<dbReference type="PIRSF" id="PIRSF500138">
    <property type="entry name" value="GPI8"/>
    <property type="match status" value="1"/>
</dbReference>
<dbReference type="PIRSF" id="PIRSF019663">
    <property type="entry name" value="Legumain"/>
    <property type="match status" value="1"/>
</dbReference>
<dbReference type="PRINTS" id="PR00776">
    <property type="entry name" value="HEMOGLOBNASE"/>
</dbReference>
<comment type="function">
    <text evidence="1">Catalytic subunit of the glycosylphosphatidylinositol-anchor (GPI-anchor) transamidase (GPI-T) complex that catalyzes the formation of the linkage between a proprotein and a GPI-anchor and participates in GPI anchored protein biosynthesis. Recognizes diverse proproteins at a C-terminal signal peptide (CSP) region that lacks consensus sequence and replaces it with a GPI-anchor via a transamidation reaction. Transamidation catalysis reaction follows a two-phase mechanism. In the acyl-enzyme phase, the carbonyl group of the proproteins's omega-site undergoes a nucleophilic attack forming an enzyme-substrate thioester bond. Followed by a general acid catalysis that allows CSP releasing, regenerating the carbonyl, and forming the acyl-enzyme intermediate. In the GPI-anchor attachment phase, the amino group of the GPI-anchor's ethanolamine phosphate, the one on third mannose (EtNP3), mediates a nucleophilic attack on the carbonyl of the acyl-enzyme intermediate, replacing the CSP, allowing GPI-anchor attachment to the omega-residue, therefore forming the product and freeing the enzyme.</text>
</comment>
<comment type="activity regulation">
    <text evidence="1">In the absence of proproteins substrates, exists in an inactive state with a disrupted catalytic site by an autoinhibitory loop. The binding of proprotein substrates, particularly the CSP region, to GPI-T triggers concerted conformational changes that alleviate the inhibition by the autoinhibitory loop. Meanwhile, proprotein residues near the omega- site induce the formation of a catalytic cleft for catalysis, following which the products are released and GPI-T reverts to the inactive state.</text>
</comment>
<comment type="pathway">
    <text evidence="1">Glycolipid biosynthesis; glycosylphosphatidylinositol-anchor biosynthesis.</text>
</comment>
<comment type="subunit">
    <text evidence="1">Heteropentamer. Part of the GPI-anchor transamidase complex, consisting of PIGK, PIGT, PIGS, PIGU and GAA1. Interacts with GPAA1. Interacts with PIGT; this interaction, via a disulfide link, stabilizes the expression of GAA1 and PIGK and links them to PIGS.</text>
</comment>
<comment type="subcellular location">
    <subcellularLocation>
        <location evidence="1">Endoplasmic reticulum membrane</location>
        <topology evidence="1">Single-pass type I membrane protein</topology>
    </subcellularLocation>
</comment>
<comment type="PTM">
    <text evidence="1">The disulfide bond between PIGK/GPI8 and PIGT is important for normal enzyme activity.</text>
</comment>
<comment type="similarity">
    <text evidence="2">Belongs to the peptidase C13 family.</text>
</comment>
<reference key="1">
    <citation type="submission" date="2004-11" db="EMBL/GenBank/DDBJ databases">
        <authorList>
            <consortium name="The German cDNA consortium"/>
        </authorList>
    </citation>
    <scope>NUCLEOTIDE SEQUENCE [LARGE SCALE MRNA]</scope>
    <source>
        <tissue>Brain cortex</tissue>
    </source>
</reference>
<proteinExistence type="evidence at transcript level"/>
<keyword id="KW-0106">Calcium</keyword>
<keyword id="KW-1015">Disulfide bond</keyword>
<keyword id="KW-0256">Endoplasmic reticulum</keyword>
<keyword id="KW-0337">GPI-anchor biosynthesis</keyword>
<keyword id="KW-0472">Membrane</keyword>
<keyword id="KW-0479">Metal-binding</keyword>
<keyword id="KW-1185">Reference proteome</keyword>
<keyword id="KW-0732">Signal</keyword>
<keyword id="KW-0808">Transferase</keyword>
<keyword id="KW-0812">Transmembrane</keyword>
<keyword id="KW-1133">Transmembrane helix</keyword>